<comment type="catalytic activity">
    <reaction>
        <text>D-glyceraldehyde 3-phosphate + phosphate + NADP(+) = (2R)-3-phospho-glyceroyl phosphate + NADPH + H(+)</text>
        <dbReference type="Rhea" id="RHEA:10296"/>
        <dbReference type="ChEBI" id="CHEBI:15378"/>
        <dbReference type="ChEBI" id="CHEBI:43474"/>
        <dbReference type="ChEBI" id="CHEBI:57604"/>
        <dbReference type="ChEBI" id="CHEBI:57783"/>
        <dbReference type="ChEBI" id="CHEBI:58349"/>
        <dbReference type="ChEBI" id="CHEBI:59776"/>
        <dbReference type="EC" id="1.2.1.13"/>
    </reaction>
</comment>
<comment type="pathway">
    <text>Carbohydrate biosynthesis; Calvin cycle.</text>
</comment>
<comment type="subunit">
    <text evidence="1">Homotetramer.</text>
</comment>
<comment type="subcellular location">
    <subcellularLocation>
        <location>Plastid</location>
        <location>Chloroplast</location>
    </subcellularLocation>
</comment>
<comment type="similarity">
    <text evidence="4">Belongs to the glyceraldehyde-3-phosphate dehydrogenase family.</text>
</comment>
<proteinExistence type="evidence at transcript level"/>
<gene>
    <name type="primary">GAPA</name>
</gene>
<accession>P34919</accession>
<feature type="transit peptide" description="Chloroplast" evidence="2">
    <location>
        <begin position="1"/>
        <end position="76"/>
    </location>
</feature>
<feature type="chain" id="PRO_0000010419" description="Glyceraldehyde-3-phosphate dehydrogenase, chloroplastic">
    <location>
        <begin position="77"/>
        <end position="414"/>
    </location>
</feature>
<feature type="active site" description="Nucleophile" evidence="3">
    <location>
        <position position="231"/>
    </location>
</feature>
<feature type="binding site" evidence="1">
    <location>
        <begin position="88"/>
        <end position="89"/>
    </location>
    <ligand>
        <name>NADP(+)</name>
        <dbReference type="ChEBI" id="CHEBI:58349"/>
    </ligand>
</feature>
<feature type="binding site" evidence="1">
    <location>
        <position position="112"/>
    </location>
    <ligand>
        <name>NADP(+)</name>
        <dbReference type="ChEBI" id="CHEBI:58349"/>
    </ligand>
</feature>
<feature type="binding site" evidence="1">
    <location>
        <position position="156"/>
    </location>
    <ligand>
        <name>NADP(+)</name>
        <dbReference type="ChEBI" id="CHEBI:58349"/>
    </ligand>
</feature>
<feature type="binding site" evidence="1">
    <location>
        <begin position="230"/>
        <end position="232"/>
    </location>
    <ligand>
        <name>D-glyceraldehyde 3-phosphate</name>
        <dbReference type="ChEBI" id="CHEBI:59776"/>
    </ligand>
</feature>
<feature type="binding site" evidence="1">
    <location>
        <position position="261"/>
    </location>
    <ligand>
        <name>D-glyceraldehyde 3-phosphate</name>
        <dbReference type="ChEBI" id="CHEBI:59776"/>
    </ligand>
</feature>
<feature type="binding site" evidence="1">
    <location>
        <position position="276"/>
    </location>
    <ligand>
        <name>D-glyceraldehyde 3-phosphate</name>
        <dbReference type="ChEBI" id="CHEBI:59776"/>
    </ligand>
</feature>
<feature type="binding site" evidence="1">
    <location>
        <begin position="289"/>
        <end position="290"/>
    </location>
    <ligand>
        <name>D-glyceraldehyde 3-phosphate</name>
        <dbReference type="ChEBI" id="CHEBI:59776"/>
    </ligand>
</feature>
<feature type="binding site" evidence="1">
    <location>
        <position position="312"/>
    </location>
    <ligand>
        <name>D-glyceraldehyde 3-phosphate</name>
        <dbReference type="ChEBI" id="CHEBI:59776"/>
    </ligand>
</feature>
<feature type="binding site" evidence="1">
    <location>
        <position position="394"/>
    </location>
    <ligand>
        <name>NADP(+)</name>
        <dbReference type="ChEBI" id="CHEBI:58349"/>
    </ligand>
</feature>
<feature type="site" description="Activates thiol group during catalysis" evidence="1">
    <location>
        <position position="258"/>
    </location>
</feature>
<name>G3PA_CHOCR</name>
<keyword id="KW-0113">Calvin cycle</keyword>
<keyword id="KW-0150">Chloroplast</keyword>
<keyword id="KW-0521">NADP</keyword>
<keyword id="KW-0560">Oxidoreductase</keyword>
<keyword id="KW-0934">Plastid</keyword>
<keyword id="KW-0809">Transit peptide</keyword>
<organism>
    <name type="scientific">Chondrus crispus</name>
    <name type="common">Carrageen Irish moss</name>
    <name type="synonym">Polymorpha crispa</name>
    <dbReference type="NCBI Taxonomy" id="2769"/>
    <lineage>
        <taxon>Eukaryota</taxon>
        <taxon>Rhodophyta</taxon>
        <taxon>Florideophyceae</taxon>
        <taxon>Rhodymeniophycidae</taxon>
        <taxon>Gigartinales</taxon>
        <taxon>Gigartinaceae</taxon>
        <taxon>Chondrus</taxon>
    </lineage>
</organism>
<protein>
    <recommendedName>
        <fullName>Glyceraldehyde-3-phosphate dehydrogenase, chloroplastic</fullName>
        <ecNumber>1.2.1.13</ecNumber>
    </recommendedName>
    <alternativeName>
        <fullName>NADP-dependent glyceraldehydephosphate dehydrogenase</fullName>
    </alternativeName>
</protein>
<sequence length="414" mass="44459">MAFVAPVATVRATTKSSVCQVQGRSTFAQFSGMKKVNQSSRLQPAQSGSAFGGYSDANDAFYTRVSGIVAATFGPTMKVRVAINGFGRIGRNFIRCWAGRSDSNMEVVCINDTSGVKTASHLLKYDSILGTFDADVSAGEDTISVNGKTIKIVSNRNPLQLPWKEMNIDIVVEATGVFVDAPGAGKHIEAGAKKVLITAPGKGDGIGTFVVGVNEKDYSHDKYDIVSNASCTTNCMAPFMKVLDDEFGVVRGMMTTTHSYTGDQRLLDAGHRDLRRARSAALNIVPTTTGAAKAVALVVPSLKGKLNGIALRVPTPNVSVCDVVMQVNKKTFKEEVNGALLKASEGAMKGIIKYSDEPLVSCDHRGTDESTIIDSSLTMVMGDDMIKVVAWYDNEWGYSQRVVDLGEVMARQWK</sequence>
<evidence type="ECO:0000250" key="1"/>
<evidence type="ECO:0000255" key="2"/>
<evidence type="ECO:0000255" key="3">
    <source>
        <dbReference type="PROSITE-ProRule" id="PRU10009"/>
    </source>
</evidence>
<evidence type="ECO:0000305" key="4"/>
<reference key="1">
    <citation type="journal article" date="1994" name="J. Mol. Evol.">
        <title>The evolutionary origin of red algae as deduced from the nuclear genes encoding cytosolic and chloroplast glyceraldehyde-3-phosphate dehydrogenases from Chondrus crispus.</title>
        <authorList>
            <person name="Liaud M.-F."/>
            <person name="Valentin C."/>
            <person name="Martin W."/>
            <person name="Bouget F.Y."/>
            <person name="Kloareg B."/>
            <person name="Cerff R."/>
        </authorList>
    </citation>
    <scope>NUCLEOTIDE SEQUENCE [MRNA]</scope>
    <source>
        <strain>Stackhouse</strain>
    </source>
</reference>
<dbReference type="EC" id="1.2.1.13"/>
<dbReference type="EMBL" id="X73035">
    <property type="protein sequence ID" value="CAA51516.1"/>
    <property type="molecule type" value="mRNA"/>
</dbReference>
<dbReference type="SMR" id="P34919"/>
<dbReference type="UniPathway" id="UPA00116"/>
<dbReference type="GO" id="GO:0009507">
    <property type="term" value="C:chloroplast"/>
    <property type="evidence" value="ECO:0007669"/>
    <property type="project" value="UniProtKB-SubCell"/>
</dbReference>
<dbReference type="GO" id="GO:0047100">
    <property type="term" value="F:glyceraldehyde-3-phosphate dehydrogenase (NADP+) (phosphorylating) activity"/>
    <property type="evidence" value="ECO:0007669"/>
    <property type="project" value="UniProtKB-EC"/>
</dbReference>
<dbReference type="GO" id="GO:0051287">
    <property type="term" value="F:NAD binding"/>
    <property type="evidence" value="ECO:0007669"/>
    <property type="project" value="InterPro"/>
</dbReference>
<dbReference type="GO" id="GO:0050661">
    <property type="term" value="F:NADP binding"/>
    <property type="evidence" value="ECO:0007669"/>
    <property type="project" value="InterPro"/>
</dbReference>
<dbReference type="GO" id="GO:0006006">
    <property type="term" value="P:glucose metabolic process"/>
    <property type="evidence" value="ECO:0007669"/>
    <property type="project" value="InterPro"/>
</dbReference>
<dbReference type="GO" id="GO:0019253">
    <property type="term" value="P:reductive pentose-phosphate cycle"/>
    <property type="evidence" value="ECO:0007669"/>
    <property type="project" value="UniProtKB-UniPathway"/>
</dbReference>
<dbReference type="CDD" id="cd18126">
    <property type="entry name" value="GAPDH_I_C"/>
    <property type="match status" value="1"/>
</dbReference>
<dbReference type="CDD" id="cd05214">
    <property type="entry name" value="GAPDH_I_N"/>
    <property type="match status" value="1"/>
</dbReference>
<dbReference type="FunFam" id="3.30.360.10:FF:000002">
    <property type="entry name" value="Glyceraldehyde-3-phosphate dehydrogenase"/>
    <property type="match status" value="1"/>
</dbReference>
<dbReference type="FunFam" id="3.40.50.720:FF:000001">
    <property type="entry name" value="Glyceraldehyde-3-phosphate dehydrogenase"/>
    <property type="match status" value="1"/>
</dbReference>
<dbReference type="Gene3D" id="3.30.360.10">
    <property type="entry name" value="Dihydrodipicolinate Reductase, domain 2"/>
    <property type="match status" value="1"/>
</dbReference>
<dbReference type="Gene3D" id="3.40.50.720">
    <property type="entry name" value="NAD(P)-binding Rossmann-like Domain"/>
    <property type="match status" value="1"/>
</dbReference>
<dbReference type="InterPro" id="IPR020831">
    <property type="entry name" value="GlycerAld/Erythrose_P_DH"/>
</dbReference>
<dbReference type="InterPro" id="IPR020830">
    <property type="entry name" value="GlycerAld_3-P_DH_AS"/>
</dbReference>
<dbReference type="InterPro" id="IPR020829">
    <property type="entry name" value="GlycerAld_3-P_DH_cat"/>
</dbReference>
<dbReference type="InterPro" id="IPR020828">
    <property type="entry name" value="GlycerAld_3-P_DH_NAD(P)-bd"/>
</dbReference>
<dbReference type="InterPro" id="IPR006424">
    <property type="entry name" value="Glyceraldehyde-3-P_DH_1"/>
</dbReference>
<dbReference type="InterPro" id="IPR036291">
    <property type="entry name" value="NAD(P)-bd_dom_sf"/>
</dbReference>
<dbReference type="NCBIfam" id="TIGR01534">
    <property type="entry name" value="GAPDH-I"/>
    <property type="match status" value="1"/>
</dbReference>
<dbReference type="PANTHER" id="PTHR43148">
    <property type="entry name" value="GLYCERALDEHYDE-3-PHOSPHATE DEHYDROGENASE 2"/>
    <property type="match status" value="1"/>
</dbReference>
<dbReference type="Pfam" id="PF02800">
    <property type="entry name" value="Gp_dh_C"/>
    <property type="match status" value="1"/>
</dbReference>
<dbReference type="Pfam" id="PF00044">
    <property type="entry name" value="Gp_dh_N"/>
    <property type="match status" value="1"/>
</dbReference>
<dbReference type="PRINTS" id="PR00078">
    <property type="entry name" value="G3PDHDRGNASE"/>
</dbReference>
<dbReference type="SMART" id="SM00846">
    <property type="entry name" value="Gp_dh_N"/>
    <property type="match status" value="1"/>
</dbReference>
<dbReference type="SUPFAM" id="SSF55347">
    <property type="entry name" value="Glyceraldehyde-3-phosphate dehydrogenase-like, C-terminal domain"/>
    <property type="match status" value="1"/>
</dbReference>
<dbReference type="SUPFAM" id="SSF51735">
    <property type="entry name" value="NAD(P)-binding Rossmann-fold domains"/>
    <property type="match status" value="1"/>
</dbReference>
<dbReference type="PROSITE" id="PS00071">
    <property type="entry name" value="GAPDH"/>
    <property type="match status" value="1"/>
</dbReference>